<protein>
    <recommendedName>
        <fullName evidence="1">Protoheme IX farnesyltransferase</fullName>
        <ecNumber evidence="1">2.5.1.141</ecNumber>
    </recommendedName>
    <alternativeName>
        <fullName evidence="1">Heme B farnesyltransferase</fullName>
    </alternativeName>
    <alternativeName>
        <fullName evidence="1">Heme O synthase</fullName>
    </alternativeName>
</protein>
<organism>
    <name type="scientific">Photorhabdus laumondii subsp. laumondii (strain DSM 15139 / CIP 105565 / TT01)</name>
    <name type="common">Photorhabdus luminescens subsp. laumondii</name>
    <dbReference type="NCBI Taxonomy" id="243265"/>
    <lineage>
        <taxon>Bacteria</taxon>
        <taxon>Pseudomonadati</taxon>
        <taxon>Pseudomonadota</taxon>
        <taxon>Gammaproteobacteria</taxon>
        <taxon>Enterobacterales</taxon>
        <taxon>Morganellaceae</taxon>
        <taxon>Photorhabdus</taxon>
    </lineage>
</organism>
<gene>
    <name evidence="1" type="primary">cyoE</name>
    <name type="ordered locus">plu3879</name>
</gene>
<sequence length="294" mass="32100">MIKQYLQVTKPGIIFGNLISVIGGFLLASKGVIDYPLFISTLLGVSLVVASGCVFNNYIDRDIDRIMERTKNRVLVKGLIDPKISLIYASILGIAGIVLLYAAANALAMQLAIIGFVVYVGVYSLYMKRKSVYGTLIGSLSGAAPPVIGYCAVTGQFDTGALILLLIFSLWQMPHSYAIAIFRFKDYQAANIPVLPVIKGISVAKNHIILYILAFMIATLMLAISGYAGYKYLVVAAAVSVWWLGMALSGYKTDNDRIWARKLFIFSIVAITSLSVMMSIDPHVPSEAFLTYVR</sequence>
<evidence type="ECO:0000255" key="1">
    <source>
        <dbReference type="HAMAP-Rule" id="MF_00154"/>
    </source>
</evidence>
<accession>Q7N0K3</accession>
<proteinExistence type="inferred from homology"/>
<dbReference type="EC" id="2.5.1.141" evidence="1"/>
<dbReference type="EMBL" id="BX571872">
    <property type="protein sequence ID" value="CAE16251.1"/>
    <property type="molecule type" value="Genomic_DNA"/>
</dbReference>
<dbReference type="RefSeq" id="WP_011148018.1">
    <property type="nucleotide sequence ID" value="NC_005126.1"/>
</dbReference>
<dbReference type="SMR" id="Q7N0K3"/>
<dbReference type="STRING" id="243265.plu3879"/>
<dbReference type="GeneID" id="48850110"/>
<dbReference type="KEGG" id="plu:plu3879"/>
<dbReference type="eggNOG" id="COG0109">
    <property type="taxonomic scope" value="Bacteria"/>
</dbReference>
<dbReference type="HOGENOM" id="CLU_029631_0_0_6"/>
<dbReference type="OrthoDB" id="9814417at2"/>
<dbReference type="UniPathway" id="UPA00834">
    <property type="reaction ID" value="UER00712"/>
</dbReference>
<dbReference type="Proteomes" id="UP000002514">
    <property type="component" value="Chromosome"/>
</dbReference>
<dbReference type="GO" id="GO:0005886">
    <property type="term" value="C:plasma membrane"/>
    <property type="evidence" value="ECO:0007669"/>
    <property type="project" value="UniProtKB-SubCell"/>
</dbReference>
<dbReference type="GO" id="GO:0008495">
    <property type="term" value="F:protoheme IX farnesyltransferase activity"/>
    <property type="evidence" value="ECO:0007669"/>
    <property type="project" value="UniProtKB-UniRule"/>
</dbReference>
<dbReference type="GO" id="GO:0048034">
    <property type="term" value="P:heme O biosynthetic process"/>
    <property type="evidence" value="ECO:0007669"/>
    <property type="project" value="UniProtKB-UniRule"/>
</dbReference>
<dbReference type="CDD" id="cd13957">
    <property type="entry name" value="PT_UbiA_Cox10"/>
    <property type="match status" value="1"/>
</dbReference>
<dbReference type="FunFam" id="1.10.357.140:FF:000001">
    <property type="entry name" value="Protoheme IX farnesyltransferase"/>
    <property type="match status" value="1"/>
</dbReference>
<dbReference type="Gene3D" id="1.10.357.140">
    <property type="entry name" value="UbiA prenyltransferase"/>
    <property type="match status" value="1"/>
</dbReference>
<dbReference type="HAMAP" id="MF_00154">
    <property type="entry name" value="CyoE_CtaB"/>
    <property type="match status" value="1"/>
</dbReference>
<dbReference type="InterPro" id="IPR006369">
    <property type="entry name" value="Protohaem_IX_farnesylTrfase"/>
</dbReference>
<dbReference type="InterPro" id="IPR000537">
    <property type="entry name" value="UbiA_prenyltransferase"/>
</dbReference>
<dbReference type="InterPro" id="IPR030470">
    <property type="entry name" value="UbiA_prenylTrfase_CS"/>
</dbReference>
<dbReference type="InterPro" id="IPR044878">
    <property type="entry name" value="UbiA_sf"/>
</dbReference>
<dbReference type="NCBIfam" id="TIGR01473">
    <property type="entry name" value="cyoE_ctaB"/>
    <property type="match status" value="1"/>
</dbReference>
<dbReference type="NCBIfam" id="NF003348">
    <property type="entry name" value="PRK04375.1-1"/>
    <property type="match status" value="1"/>
</dbReference>
<dbReference type="PANTHER" id="PTHR43448">
    <property type="entry name" value="PROTOHEME IX FARNESYLTRANSFERASE, MITOCHONDRIAL"/>
    <property type="match status" value="1"/>
</dbReference>
<dbReference type="PANTHER" id="PTHR43448:SF2">
    <property type="entry name" value="PROTOHEME IX FARNESYLTRANSFERASE, MITOCHONDRIAL"/>
    <property type="match status" value="1"/>
</dbReference>
<dbReference type="Pfam" id="PF01040">
    <property type="entry name" value="UbiA"/>
    <property type="match status" value="1"/>
</dbReference>
<dbReference type="PROSITE" id="PS00943">
    <property type="entry name" value="UBIA"/>
    <property type="match status" value="1"/>
</dbReference>
<keyword id="KW-0997">Cell inner membrane</keyword>
<keyword id="KW-1003">Cell membrane</keyword>
<keyword id="KW-0350">Heme biosynthesis</keyword>
<keyword id="KW-0472">Membrane</keyword>
<keyword id="KW-1185">Reference proteome</keyword>
<keyword id="KW-0808">Transferase</keyword>
<keyword id="KW-0812">Transmembrane</keyword>
<keyword id="KW-1133">Transmembrane helix</keyword>
<name>CYOE_PHOLL</name>
<comment type="function">
    <text evidence="1">Converts heme B (protoheme IX) to heme O by substitution of the vinyl group on carbon 2 of heme B porphyrin ring with a hydroxyethyl farnesyl side group.</text>
</comment>
<comment type="catalytic activity">
    <reaction evidence="1">
        <text>heme b + (2E,6E)-farnesyl diphosphate + H2O = Fe(II)-heme o + diphosphate</text>
        <dbReference type="Rhea" id="RHEA:28070"/>
        <dbReference type="ChEBI" id="CHEBI:15377"/>
        <dbReference type="ChEBI" id="CHEBI:33019"/>
        <dbReference type="ChEBI" id="CHEBI:60344"/>
        <dbReference type="ChEBI" id="CHEBI:60530"/>
        <dbReference type="ChEBI" id="CHEBI:175763"/>
        <dbReference type="EC" id="2.5.1.141"/>
    </reaction>
</comment>
<comment type="pathway">
    <text evidence="1">Porphyrin-containing compound metabolism; heme O biosynthesis; heme O from protoheme: step 1/1.</text>
</comment>
<comment type="subcellular location">
    <subcellularLocation>
        <location evidence="1">Cell inner membrane</location>
        <topology evidence="1">Multi-pass membrane protein</topology>
    </subcellularLocation>
</comment>
<comment type="miscellaneous">
    <text evidence="1">Carbon 2 of the heme B porphyrin ring is defined according to the Fischer nomenclature.</text>
</comment>
<comment type="similarity">
    <text evidence="1">Belongs to the UbiA prenyltransferase family. Protoheme IX farnesyltransferase subfamily.</text>
</comment>
<feature type="chain" id="PRO_0000326913" description="Protoheme IX farnesyltransferase">
    <location>
        <begin position="1"/>
        <end position="294"/>
    </location>
</feature>
<feature type="transmembrane region" description="Helical" evidence="1">
    <location>
        <begin position="13"/>
        <end position="33"/>
    </location>
</feature>
<feature type="transmembrane region" description="Helical" evidence="1">
    <location>
        <begin position="35"/>
        <end position="55"/>
    </location>
</feature>
<feature type="transmembrane region" description="Helical" evidence="1">
    <location>
        <begin position="84"/>
        <end position="104"/>
    </location>
</feature>
<feature type="transmembrane region" description="Helical" evidence="1">
    <location>
        <begin position="107"/>
        <end position="127"/>
    </location>
</feature>
<feature type="transmembrane region" description="Helical" evidence="1">
    <location>
        <begin position="132"/>
        <end position="152"/>
    </location>
</feature>
<feature type="transmembrane region" description="Helical" evidence="1">
    <location>
        <begin position="162"/>
        <end position="182"/>
    </location>
</feature>
<feature type="transmembrane region" description="Helical" evidence="1">
    <location>
        <begin position="208"/>
        <end position="228"/>
    </location>
</feature>
<feature type="transmembrane region" description="Helical" evidence="1">
    <location>
        <begin position="229"/>
        <end position="249"/>
    </location>
</feature>
<feature type="transmembrane region" description="Helical" evidence="1">
    <location>
        <begin position="264"/>
        <end position="284"/>
    </location>
</feature>
<reference key="1">
    <citation type="journal article" date="2003" name="Nat. Biotechnol.">
        <title>The genome sequence of the entomopathogenic bacterium Photorhabdus luminescens.</title>
        <authorList>
            <person name="Duchaud E."/>
            <person name="Rusniok C."/>
            <person name="Frangeul L."/>
            <person name="Buchrieser C."/>
            <person name="Givaudan A."/>
            <person name="Taourit S."/>
            <person name="Bocs S."/>
            <person name="Boursaux-Eude C."/>
            <person name="Chandler M."/>
            <person name="Charles J.-F."/>
            <person name="Dassa E."/>
            <person name="Derose R."/>
            <person name="Derzelle S."/>
            <person name="Freyssinet G."/>
            <person name="Gaudriault S."/>
            <person name="Medigue C."/>
            <person name="Lanois A."/>
            <person name="Powell K."/>
            <person name="Siguier P."/>
            <person name="Vincent R."/>
            <person name="Wingate V."/>
            <person name="Zouine M."/>
            <person name="Glaser P."/>
            <person name="Boemare N."/>
            <person name="Danchin A."/>
            <person name="Kunst F."/>
        </authorList>
    </citation>
    <scope>NUCLEOTIDE SEQUENCE [LARGE SCALE GENOMIC DNA]</scope>
    <source>
        <strain>DSM 15139 / CIP 105565 / TT01</strain>
    </source>
</reference>